<name>RPOA_GEOMG</name>
<gene>
    <name evidence="1" type="primary">rpoA</name>
    <name type="ordered locus">Gmet_0653</name>
</gene>
<accession>Q39XX9</accession>
<dbReference type="EC" id="2.7.7.6" evidence="1"/>
<dbReference type="EMBL" id="CP000148">
    <property type="protein sequence ID" value="ABB30895.1"/>
    <property type="molecule type" value="Genomic_DNA"/>
</dbReference>
<dbReference type="RefSeq" id="WP_004514261.1">
    <property type="nucleotide sequence ID" value="NC_007517.1"/>
</dbReference>
<dbReference type="SMR" id="Q39XX9"/>
<dbReference type="STRING" id="269799.Gmet_0653"/>
<dbReference type="KEGG" id="gme:Gmet_0653"/>
<dbReference type="eggNOG" id="COG0202">
    <property type="taxonomic scope" value="Bacteria"/>
</dbReference>
<dbReference type="HOGENOM" id="CLU_053084_0_1_7"/>
<dbReference type="Proteomes" id="UP000007073">
    <property type="component" value="Chromosome"/>
</dbReference>
<dbReference type="GO" id="GO:0005737">
    <property type="term" value="C:cytoplasm"/>
    <property type="evidence" value="ECO:0007669"/>
    <property type="project" value="UniProtKB-ARBA"/>
</dbReference>
<dbReference type="GO" id="GO:0000428">
    <property type="term" value="C:DNA-directed RNA polymerase complex"/>
    <property type="evidence" value="ECO:0007669"/>
    <property type="project" value="UniProtKB-KW"/>
</dbReference>
<dbReference type="GO" id="GO:0003677">
    <property type="term" value="F:DNA binding"/>
    <property type="evidence" value="ECO:0007669"/>
    <property type="project" value="UniProtKB-UniRule"/>
</dbReference>
<dbReference type="GO" id="GO:0003899">
    <property type="term" value="F:DNA-directed RNA polymerase activity"/>
    <property type="evidence" value="ECO:0007669"/>
    <property type="project" value="UniProtKB-UniRule"/>
</dbReference>
<dbReference type="GO" id="GO:0046983">
    <property type="term" value="F:protein dimerization activity"/>
    <property type="evidence" value="ECO:0007669"/>
    <property type="project" value="InterPro"/>
</dbReference>
<dbReference type="GO" id="GO:0006351">
    <property type="term" value="P:DNA-templated transcription"/>
    <property type="evidence" value="ECO:0007669"/>
    <property type="project" value="UniProtKB-UniRule"/>
</dbReference>
<dbReference type="CDD" id="cd06928">
    <property type="entry name" value="RNAP_alpha_NTD"/>
    <property type="match status" value="1"/>
</dbReference>
<dbReference type="FunFam" id="1.10.150.20:FF:000001">
    <property type="entry name" value="DNA-directed RNA polymerase subunit alpha"/>
    <property type="match status" value="1"/>
</dbReference>
<dbReference type="FunFam" id="2.170.120.12:FF:000001">
    <property type="entry name" value="DNA-directed RNA polymerase subunit alpha"/>
    <property type="match status" value="1"/>
</dbReference>
<dbReference type="Gene3D" id="1.10.150.20">
    <property type="entry name" value="5' to 3' exonuclease, C-terminal subdomain"/>
    <property type="match status" value="1"/>
</dbReference>
<dbReference type="Gene3D" id="2.170.120.12">
    <property type="entry name" value="DNA-directed RNA polymerase, insert domain"/>
    <property type="match status" value="1"/>
</dbReference>
<dbReference type="Gene3D" id="3.30.1360.10">
    <property type="entry name" value="RNA polymerase, RBP11-like subunit"/>
    <property type="match status" value="1"/>
</dbReference>
<dbReference type="HAMAP" id="MF_00059">
    <property type="entry name" value="RNApol_bact_RpoA"/>
    <property type="match status" value="1"/>
</dbReference>
<dbReference type="InterPro" id="IPR011262">
    <property type="entry name" value="DNA-dir_RNA_pol_insert"/>
</dbReference>
<dbReference type="InterPro" id="IPR011263">
    <property type="entry name" value="DNA-dir_RNA_pol_RpoA/D/Rpb3"/>
</dbReference>
<dbReference type="InterPro" id="IPR011773">
    <property type="entry name" value="DNA-dir_RpoA"/>
</dbReference>
<dbReference type="InterPro" id="IPR036603">
    <property type="entry name" value="RBP11-like"/>
</dbReference>
<dbReference type="InterPro" id="IPR011260">
    <property type="entry name" value="RNAP_asu_C"/>
</dbReference>
<dbReference type="InterPro" id="IPR036643">
    <property type="entry name" value="RNApol_insert_sf"/>
</dbReference>
<dbReference type="NCBIfam" id="NF003513">
    <property type="entry name" value="PRK05182.1-2"/>
    <property type="match status" value="1"/>
</dbReference>
<dbReference type="NCBIfam" id="NF003515">
    <property type="entry name" value="PRK05182.2-1"/>
    <property type="match status" value="1"/>
</dbReference>
<dbReference type="NCBIfam" id="NF003519">
    <property type="entry name" value="PRK05182.2-5"/>
    <property type="match status" value="1"/>
</dbReference>
<dbReference type="NCBIfam" id="TIGR02027">
    <property type="entry name" value="rpoA"/>
    <property type="match status" value="1"/>
</dbReference>
<dbReference type="Pfam" id="PF01000">
    <property type="entry name" value="RNA_pol_A_bac"/>
    <property type="match status" value="1"/>
</dbReference>
<dbReference type="Pfam" id="PF03118">
    <property type="entry name" value="RNA_pol_A_CTD"/>
    <property type="match status" value="1"/>
</dbReference>
<dbReference type="Pfam" id="PF01193">
    <property type="entry name" value="RNA_pol_L"/>
    <property type="match status" value="1"/>
</dbReference>
<dbReference type="SMART" id="SM00662">
    <property type="entry name" value="RPOLD"/>
    <property type="match status" value="1"/>
</dbReference>
<dbReference type="SUPFAM" id="SSF47789">
    <property type="entry name" value="C-terminal domain of RNA polymerase alpha subunit"/>
    <property type="match status" value="1"/>
</dbReference>
<dbReference type="SUPFAM" id="SSF56553">
    <property type="entry name" value="Insert subdomain of RNA polymerase alpha subunit"/>
    <property type="match status" value="1"/>
</dbReference>
<dbReference type="SUPFAM" id="SSF55257">
    <property type="entry name" value="RBP11-like subunits of RNA polymerase"/>
    <property type="match status" value="1"/>
</dbReference>
<reference key="1">
    <citation type="journal article" date="2009" name="BMC Microbiol.">
        <title>The genome sequence of Geobacter metallireducens: features of metabolism, physiology and regulation common and dissimilar to Geobacter sulfurreducens.</title>
        <authorList>
            <person name="Aklujkar M."/>
            <person name="Krushkal J."/>
            <person name="DiBartolo G."/>
            <person name="Lapidus A."/>
            <person name="Land M.L."/>
            <person name="Lovley D.R."/>
        </authorList>
    </citation>
    <scope>NUCLEOTIDE SEQUENCE [LARGE SCALE GENOMIC DNA]</scope>
    <source>
        <strain>ATCC 53774 / DSM 7210 / GS-15</strain>
    </source>
</reference>
<sequence length="340" mass="37873">MYRNWRDLISPKKLQVESESLTNTYGKFFAEPFERGFGTTLGNSLRRVLLSSLQGAAISSVKIKGVLHEFSSIPGVTEDVTNIILNLKGVSLKMHGNEARTVRIIHKGDGIVKAGDIVTDANVEILNPDHHIATCSKDANLEMEMVVKLGKGYVPSDRNRDEKAPVGTMPIDAIFSPIKKVNFTVSNARVGQMTDYDKLTLEVWTNGSVVPEDAVAFAAKILKEQLSIFINFDEEAEPAEEAETEEERERVNENLYRSVDELELSVRSANCLKNAGIKMIGELVSRSEAEMLKTQNFGRKSLNEIKDILADMGLTLGMKLDGFPDPEVMRRIRGERKDEE</sequence>
<protein>
    <recommendedName>
        <fullName evidence="1">DNA-directed RNA polymerase subunit alpha</fullName>
        <shortName evidence="1">RNAP subunit alpha</shortName>
        <ecNumber evidence="1">2.7.7.6</ecNumber>
    </recommendedName>
    <alternativeName>
        <fullName evidence="1">RNA polymerase subunit alpha</fullName>
    </alternativeName>
    <alternativeName>
        <fullName evidence="1">Transcriptase subunit alpha</fullName>
    </alternativeName>
</protein>
<keyword id="KW-0240">DNA-directed RNA polymerase</keyword>
<keyword id="KW-0548">Nucleotidyltransferase</keyword>
<keyword id="KW-1185">Reference proteome</keyword>
<keyword id="KW-0804">Transcription</keyword>
<keyword id="KW-0808">Transferase</keyword>
<organism>
    <name type="scientific">Geobacter metallireducens (strain ATCC 53774 / DSM 7210 / GS-15)</name>
    <dbReference type="NCBI Taxonomy" id="269799"/>
    <lineage>
        <taxon>Bacteria</taxon>
        <taxon>Pseudomonadati</taxon>
        <taxon>Thermodesulfobacteriota</taxon>
        <taxon>Desulfuromonadia</taxon>
        <taxon>Geobacterales</taxon>
        <taxon>Geobacteraceae</taxon>
        <taxon>Geobacter</taxon>
    </lineage>
</organism>
<feature type="chain" id="PRO_0000264502" description="DNA-directed RNA polymerase subunit alpha">
    <location>
        <begin position="1"/>
        <end position="340"/>
    </location>
</feature>
<feature type="region of interest" description="Alpha N-terminal domain (alpha-NTD)" evidence="1">
    <location>
        <begin position="1"/>
        <end position="233"/>
    </location>
</feature>
<feature type="region of interest" description="Alpha C-terminal domain (alpha-CTD)" evidence="1">
    <location>
        <begin position="251"/>
        <end position="340"/>
    </location>
</feature>
<comment type="function">
    <text evidence="1">DNA-dependent RNA polymerase catalyzes the transcription of DNA into RNA using the four ribonucleoside triphosphates as substrates.</text>
</comment>
<comment type="catalytic activity">
    <reaction evidence="1">
        <text>RNA(n) + a ribonucleoside 5'-triphosphate = RNA(n+1) + diphosphate</text>
        <dbReference type="Rhea" id="RHEA:21248"/>
        <dbReference type="Rhea" id="RHEA-COMP:14527"/>
        <dbReference type="Rhea" id="RHEA-COMP:17342"/>
        <dbReference type="ChEBI" id="CHEBI:33019"/>
        <dbReference type="ChEBI" id="CHEBI:61557"/>
        <dbReference type="ChEBI" id="CHEBI:140395"/>
        <dbReference type="EC" id="2.7.7.6"/>
    </reaction>
</comment>
<comment type="subunit">
    <text evidence="1">Homodimer. The RNAP catalytic core consists of 2 alpha, 1 beta, 1 beta' and 1 omega subunit. When a sigma factor is associated with the core the holoenzyme is formed, which can initiate transcription.</text>
</comment>
<comment type="domain">
    <text evidence="1">The N-terminal domain is essential for RNAP assembly and basal transcription, whereas the C-terminal domain is involved in interaction with transcriptional regulators and with upstream promoter elements.</text>
</comment>
<comment type="similarity">
    <text evidence="1">Belongs to the RNA polymerase alpha chain family.</text>
</comment>
<evidence type="ECO:0000255" key="1">
    <source>
        <dbReference type="HAMAP-Rule" id="MF_00059"/>
    </source>
</evidence>
<proteinExistence type="inferred from homology"/>